<keyword id="KW-0963">Cytoplasm</keyword>
<keyword id="KW-0489">Methyltransferase</keyword>
<keyword id="KW-0698">rRNA processing</keyword>
<keyword id="KW-0949">S-adenosyl-L-methionine</keyword>
<keyword id="KW-0808">Transferase</keyword>
<sequence>MNDAALAPDVSAALERGLQAQSLDTAFAAPLLRYLALLVRWNKTYNLTAVRDPRAMVTRHLLDSLAMQPYIASGMLADLGTGPGLPGIPLAITRPQLQVTLVESNGKKVRFMREALRHLELRNARVAESRAEALDEPTAYDHLTARALDKLAGIIAVGGHLLRPGGSLLAMKGIYPHEEIAALPEGWTMSEVHQLQVPGLDGERHLVVVRKA</sequence>
<organism>
    <name type="scientific">Xanthomonas oryzae pv. oryzae (strain MAFF 311018)</name>
    <dbReference type="NCBI Taxonomy" id="342109"/>
    <lineage>
        <taxon>Bacteria</taxon>
        <taxon>Pseudomonadati</taxon>
        <taxon>Pseudomonadota</taxon>
        <taxon>Gammaproteobacteria</taxon>
        <taxon>Lysobacterales</taxon>
        <taxon>Lysobacteraceae</taxon>
        <taxon>Xanthomonas</taxon>
    </lineage>
</organism>
<dbReference type="EC" id="2.1.1.170" evidence="1"/>
<dbReference type="EMBL" id="AP008229">
    <property type="protein sequence ID" value="BAE71047.1"/>
    <property type="molecule type" value="Genomic_DNA"/>
</dbReference>
<dbReference type="RefSeq" id="WP_011409803.1">
    <property type="nucleotide sequence ID" value="NC_007705.1"/>
</dbReference>
<dbReference type="SMR" id="Q2NXD0"/>
<dbReference type="KEGG" id="xom:XOO4292"/>
<dbReference type="HOGENOM" id="CLU_065341_2_0_6"/>
<dbReference type="GO" id="GO:0005829">
    <property type="term" value="C:cytosol"/>
    <property type="evidence" value="ECO:0007669"/>
    <property type="project" value="TreeGrafter"/>
</dbReference>
<dbReference type="GO" id="GO:0070043">
    <property type="term" value="F:rRNA (guanine-N7-)-methyltransferase activity"/>
    <property type="evidence" value="ECO:0007669"/>
    <property type="project" value="UniProtKB-UniRule"/>
</dbReference>
<dbReference type="CDD" id="cd02440">
    <property type="entry name" value="AdoMet_MTases"/>
    <property type="match status" value="1"/>
</dbReference>
<dbReference type="Gene3D" id="3.40.50.150">
    <property type="entry name" value="Vaccinia Virus protein VP39"/>
    <property type="match status" value="1"/>
</dbReference>
<dbReference type="HAMAP" id="MF_00074">
    <property type="entry name" value="16SrRNA_methyltr_G"/>
    <property type="match status" value="1"/>
</dbReference>
<dbReference type="InterPro" id="IPR003682">
    <property type="entry name" value="rRNA_ssu_MeTfrase_G"/>
</dbReference>
<dbReference type="InterPro" id="IPR029063">
    <property type="entry name" value="SAM-dependent_MTases_sf"/>
</dbReference>
<dbReference type="NCBIfam" id="TIGR00138">
    <property type="entry name" value="rsmG_gidB"/>
    <property type="match status" value="1"/>
</dbReference>
<dbReference type="PANTHER" id="PTHR31760">
    <property type="entry name" value="S-ADENOSYL-L-METHIONINE-DEPENDENT METHYLTRANSFERASES SUPERFAMILY PROTEIN"/>
    <property type="match status" value="1"/>
</dbReference>
<dbReference type="PANTHER" id="PTHR31760:SF0">
    <property type="entry name" value="S-ADENOSYL-L-METHIONINE-DEPENDENT METHYLTRANSFERASES SUPERFAMILY PROTEIN"/>
    <property type="match status" value="1"/>
</dbReference>
<dbReference type="Pfam" id="PF02527">
    <property type="entry name" value="GidB"/>
    <property type="match status" value="1"/>
</dbReference>
<dbReference type="PIRSF" id="PIRSF003078">
    <property type="entry name" value="GidB"/>
    <property type="match status" value="1"/>
</dbReference>
<dbReference type="SUPFAM" id="SSF53335">
    <property type="entry name" value="S-adenosyl-L-methionine-dependent methyltransferases"/>
    <property type="match status" value="1"/>
</dbReference>
<protein>
    <recommendedName>
        <fullName evidence="1">Ribosomal RNA small subunit methyltransferase G</fullName>
        <ecNumber evidence="1">2.1.1.170</ecNumber>
    </recommendedName>
    <alternativeName>
        <fullName evidence="1">16S rRNA 7-methylguanosine methyltransferase</fullName>
        <shortName evidence="1">16S rRNA m7G methyltransferase</shortName>
    </alternativeName>
</protein>
<proteinExistence type="inferred from homology"/>
<reference key="1">
    <citation type="journal article" date="2005" name="Jpn. Agric. Res. Q.">
        <title>Genome sequence of Xanthomonas oryzae pv. oryzae suggests contribution of large numbers of effector genes and insertion sequences to its race diversity.</title>
        <authorList>
            <person name="Ochiai H."/>
            <person name="Inoue Y."/>
            <person name="Takeya M."/>
            <person name="Sasaki A."/>
            <person name="Kaku H."/>
        </authorList>
    </citation>
    <scope>NUCLEOTIDE SEQUENCE [LARGE SCALE GENOMIC DNA]</scope>
    <source>
        <strain>MAFF 311018</strain>
    </source>
</reference>
<gene>
    <name evidence="1" type="primary">rsmG</name>
    <name type="ordered locus">XOO4292</name>
</gene>
<feature type="chain" id="PRO_1000010236" description="Ribosomal RNA small subunit methyltransferase G">
    <location>
        <begin position="1"/>
        <end position="212"/>
    </location>
</feature>
<feature type="binding site" evidence="1">
    <location>
        <position position="80"/>
    </location>
    <ligand>
        <name>S-adenosyl-L-methionine</name>
        <dbReference type="ChEBI" id="CHEBI:59789"/>
    </ligand>
</feature>
<feature type="binding site" evidence="1">
    <location>
        <position position="85"/>
    </location>
    <ligand>
        <name>S-adenosyl-L-methionine</name>
        <dbReference type="ChEBI" id="CHEBI:59789"/>
    </ligand>
</feature>
<feature type="binding site" evidence="1">
    <location>
        <begin position="131"/>
        <end position="132"/>
    </location>
    <ligand>
        <name>S-adenosyl-L-methionine</name>
        <dbReference type="ChEBI" id="CHEBI:59789"/>
    </ligand>
</feature>
<feature type="binding site" evidence="1">
    <location>
        <position position="146"/>
    </location>
    <ligand>
        <name>S-adenosyl-L-methionine</name>
        <dbReference type="ChEBI" id="CHEBI:59789"/>
    </ligand>
</feature>
<accession>Q2NXD0</accession>
<evidence type="ECO:0000255" key="1">
    <source>
        <dbReference type="HAMAP-Rule" id="MF_00074"/>
    </source>
</evidence>
<comment type="function">
    <text evidence="1">Specifically methylates the N7 position of guanine in position 527 of 16S rRNA.</text>
</comment>
<comment type="catalytic activity">
    <reaction evidence="1">
        <text>guanosine(527) in 16S rRNA + S-adenosyl-L-methionine = N(7)-methylguanosine(527) in 16S rRNA + S-adenosyl-L-homocysteine</text>
        <dbReference type="Rhea" id="RHEA:42732"/>
        <dbReference type="Rhea" id="RHEA-COMP:10209"/>
        <dbReference type="Rhea" id="RHEA-COMP:10210"/>
        <dbReference type="ChEBI" id="CHEBI:57856"/>
        <dbReference type="ChEBI" id="CHEBI:59789"/>
        <dbReference type="ChEBI" id="CHEBI:74269"/>
        <dbReference type="ChEBI" id="CHEBI:74480"/>
        <dbReference type="EC" id="2.1.1.170"/>
    </reaction>
</comment>
<comment type="subcellular location">
    <subcellularLocation>
        <location evidence="1">Cytoplasm</location>
    </subcellularLocation>
</comment>
<comment type="similarity">
    <text evidence="1">Belongs to the methyltransferase superfamily. RNA methyltransferase RsmG family.</text>
</comment>
<name>RSMG_XANOM</name>